<comment type="function">
    <text evidence="1">One of two assembly initiator proteins, it binds directly to the 5'-end of the 23S rRNA, where it nucleates assembly of the 50S subunit.</text>
</comment>
<comment type="function">
    <text evidence="1">One of the proteins that surrounds the polypeptide exit tunnel on the outside of the subunit.</text>
</comment>
<comment type="subunit">
    <text evidence="1">Part of the 50S ribosomal subunit.</text>
</comment>
<comment type="similarity">
    <text evidence="1">Belongs to the universal ribosomal protein uL24 family.</text>
</comment>
<sequence length="104" mass="11235">MAAKIRREDEVVVLAGKDKGKRAKVSQVLPTGKLIVEGVNLVKKHQKPNPQLGVAGGIVEQEAPIQASNVAIFNSATGKADRVGFRLEDGKKVRFFKSNSELVK</sequence>
<keyword id="KW-1185">Reference proteome</keyword>
<keyword id="KW-0687">Ribonucleoprotein</keyword>
<keyword id="KW-0689">Ribosomal protein</keyword>
<keyword id="KW-0694">RNA-binding</keyword>
<keyword id="KW-0699">rRNA-binding</keyword>
<accession>B1KMX2</accession>
<gene>
    <name evidence="1" type="primary">rplX</name>
    <name type="ordered locus">Swoo_4679</name>
</gene>
<protein>
    <recommendedName>
        <fullName evidence="1">Large ribosomal subunit protein uL24</fullName>
    </recommendedName>
    <alternativeName>
        <fullName evidence="2">50S ribosomal protein L24</fullName>
    </alternativeName>
</protein>
<organism>
    <name type="scientific">Shewanella woodyi (strain ATCC 51908 / MS32)</name>
    <dbReference type="NCBI Taxonomy" id="392500"/>
    <lineage>
        <taxon>Bacteria</taxon>
        <taxon>Pseudomonadati</taxon>
        <taxon>Pseudomonadota</taxon>
        <taxon>Gammaproteobacteria</taxon>
        <taxon>Alteromonadales</taxon>
        <taxon>Shewanellaceae</taxon>
        <taxon>Shewanella</taxon>
    </lineage>
</organism>
<evidence type="ECO:0000255" key="1">
    <source>
        <dbReference type="HAMAP-Rule" id="MF_01326"/>
    </source>
</evidence>
<evidence type="ECO:0000305" key="2"/>
<proteinExistence type="inferred from homology"/>
<dbReference type="EMBL" id="CP000961">
    <property type="protein sequence ID" value="ACA88929.1"/>
    <property type="molecule type" value="Genomic_DNA"/>
</dbReference>
<dbReference type="RefSeq" id="WP_012327252.1">
    <property type="nucleotide sequence ID" value="NC_010506.1"/>
</dbReference>
<dbReference type="SMR" id="B1KMX2"/>
<dbReference type="STRING" id="392500.Swoo_4679"/>
<dbReference type="KEGG" id="swd:Swoo_4679"/>
<dbReference type="eggNOG" id="COG0198">
    <property type="taxonomic scope" value="Bacteria"/>
</dbReference>
<dbReference type="HOGENOM" id="CLU_093315_2_2_6"/>
<dbReference type="Proteomes" id="UP000002168">
    <property type="component" value="Chromosome"/>
</dbReference>
<dbReference type="GO" id="GO:1990904">
    <property type="term" value="C:ribonucleoprotein complex"/>
    <property type="evidence" value="ECO:0007669"/>
    <property type="project" value="UniProtKB-KW"/>
</dbReference>
<dbReference type="GO" id="GO:0005840">
    <property type="term" value="C:ribosome"/>
    <property type="evidence" value="ECO:0007669"/>
    <property type="project" value="UniProtKB-KW"/>
</dbReference>
<dbReference type="GO" id="GO:0019843">
    <property type="term" value="F:rRNA binding"/>
    <property type="evidence" value="ECO:0007669"/>
    <property type="project" value="UniProtKB-UniRule"/>
</dbReference>
<dbReference type="GO" id="GO:0003735">
    <property type="term" value="F:structural constituent of ribosome"/>
    <property type="evidence" value="ECO:0007669"/>
    <property type="project" value="InterPro"/>
</dbReference>
<dbReference type="GO" id="GO:0006412">
    <property type="term" value="P:translation"/>
    <property type="evidence" value="ECO:0007669"/>
    <property type="project" value="UniProtKB-UniRule"/>
</dbReference>
<dbReference type="CDD" id="cd06089">
    <property type="entry name" value="KOW_RPL26"/>
    <property type="match status" value="1"/>
</dbReference>
<dbReference type="FunFam" id="2.30.30.30:FF:000004">
    <property type="entry name" value="50S ribosomal protein L24"/>
    <property type="match status" value="1"/>
</dbReference>
<dbReference type="Gene3D" id="2.30.30.30">
    <property type="match status" value="1"/>
</dbReference>
<dbReference type="HAMAP" id="MF_01326_B">
    <property type="entry name" value="Ribosomal_uL24_B"/>
    <property type="match status" value="1"/>
</dbReference>
<dbReference type="InterPro" id="IPR005824">
    <property type="entry name" value="KOW"/>
</dbReference>
<dbReference type="InterPro" id="IPR014722">
    <property type="entry name" value="Rib_uL2_dom2"/>
</dbReference>
<dbReference type="InterPro" id="IPR003256">
    <property type="entry name" value="Ribosomal_uL24"/>
</dbReference>
<dbReference type="InterPro" id="IPR005825">
    <property type="entry name" value="Ribosomal_uL24_CS"/>
</dbReference>
<dbReference type="InterPro" id="IPR041988">
    <property type="entry name" value="Ribosomal_uL24_KOW"/>
</dbReference>
<dbReference type="InterPro" id="IPR008991">
    <property type="entry name" value="Translation_prot_SH3-like_sf"/>
</dbReference>
<dbReference type="NCBIfam" id="TIGR01079">
    <property type="entry name" value="rplX_bact"/>
    <property type="match status" value="1"/>
</dbReference>
<dbReference type="PANTHER" id="PTHR12903">
    <property type="entry name" value="MITOCHONDRIAL RIBOSOMAL PROTEIN L24"/>
    <property type="match status" value="1"/>
</dbReference>
<dbReference type="Pfam" id="PF00467">
    <property type="entry name" value="KOW"/>
    <property type="match status" value="1"/>
</dbReference>
<dbReference type="Pfam" id="PF17136">
    <property type="entry name" value="ribosomal_L24"/>
    <property type="match status" value="1"/>
</dbReference>
<dbReference type="SMART" id="SM00739">
    <property type="entry name" value="KOW"/>
    <property type="match status" value="1"/>
</dbReference>
<dbReference type="SUPFAM" id="SSF50104">
    <property type="entry name" value="Translation proteins SH3-like domain"/>
    <property type="match status" value="1"/>
</dbReference>
<dbReference type="PROSITE" id="PS01108">
    <property type="entry name" value="RIBOSOMAL_L24"/>
    <property type="match status" value="1"/>
</dbReference>
<feature type="chain" id="PRO_1000142040" description="Large ribosomal subunit protein uL24">
    <location>
        <begin position="1"/>
        <end position="104"/>
    </location>
</feature>
<reference key="1">
    <citation type="submission" date="2008-02" db="EMBL/GenBank/DDBJ databases">
        <title>Complete sequence of Shewanella woodyi ATCC 51908.</title>
        <authorList>
            <consortium name="US DOE Joint Genome Institute"/>
            <person name="Copeland A."/>
            <person name="Lucas S."/>
            <person name="Lapidus A."/>
            <person name="Glavina del Rio T."/>
            <person name="Dalin E."/>
            <person name="Tice H."/>
            <person name="Bruce D."/>
            <person name="Goodwin L."/>
            <person name="Pitluck S."/>
            <person name="Sims D."/>
            <person name="Brettin T."/>
            <person name="Detter J.C."/>
            <person name="Han C."/>
            <person name="Kuske C.R."/>
            <person name="Schmutz J."/>
            <person name="Larimer F."/>
            <person name="Land M."/>
            <person name="Hauser L."/>
            <person name="Kyrpides N."/>
            <person name="Lykidis A."/>
            <person name="Zhao J.-S."/>
            <person name="Richardson P."/>
        </authorList>
    </citation>
    <scope>NUCLEOTIDE SEQUENCE [LARGE SCALE GENOMIC DNA]</scope>
    <source>
        <strain>ATCC 51908 / MS32</strain>
    </source>
</reference>
<name>RL24_SHEWM</name>